<sequence>MMSLLSLLLLGIALPATQAIDYRKCQASQILKEHGMDKVIPLPELVCTMFHISGLSTQAEVNNHSNKEYGIFQISNNGWCAEKQEDVANSVCGILCSKFLDDDITDDIECAKKILQLPEGLGYWKAHETFCIEDLDQWRC</sequence>
<gene>
    <name type="primary">LALBA</name>
</gene>
<comment type="function">
    <text>Regulatory subunit of lactose synthase, changes the substrate specificity of galactosyltransferase in the mammary gland making glucose a good acceptor substrate for this enzyme. This enables LS to synthesize lactose, the major carbohydrate component of milk. In other tissues, galactosyltransferase transfers galactose onto the N-acetylglucosamine of the oligosaccharide chains in glycoproteins.</text>
</comment>
<comment type="subunit">
    <text>Lactose synthase (LS) is a heterodimer of a catalytic component, beta1,4-galactosyltransferase (beta4Gal-T1) and a regulatory component, alpha-lactalbumin (LA).</text>
</comment>
<comment type="subcellular location">
    <subcellularLocation>
        <location>Secreted</location>
    </subcellularLocation>
</comment>
<comment type="tissue specificity">
    <text>Mammary gland specific. Secreted in milk.</text>
</comment>
<comment type="similarity">
    <text evidence="4">Belongs to the glycosyl hydrolase 22 family.</text>
</comment>
<dbReference type="EMBL" id="X15211">
    <property type="protein sequence ID" value="CAA33281.1"/>
    <property type="molecule type" value="mRNA"/>
</dbReference>
<dbReference type="EMBL" id="L15010">
    <property type="protein sequence ID" value="AAA31602.1"/>
    <property type="molecule type" value="Genomic_DNA"/>
</dbReference>
<dbReference type="EMBL" id="L15007">
    <property type="protein sequence ID" value="AAA31602.1"/>
    <property type="status" value="JOINED"/>
    <property type="molecule type" value="Genomic_DNA"/>
</dbReference>
<dbReference type="EMBL" id="L15008">
    <property type="protein sequence ID" value="AAA31602.1"/>
    <property type="status" value="JOINED"/>
    <property type="molecule type" value="Genomic_DNA"/>
</dbReference>
<dbReference type="EMBL" id="L15009">
    <property type="protein sequence ID" value="AAA31602.1"/>
    <property type="status" value="JOINED"/>
    <property type="molecule type" value="Genomic_DNA"/>
</dbReference>
<dbReference type="PIR" id="A60394">
    <property type="entry name" value="A60394"/>
</dbReference>
<dbReference type="SMR" id="Q06655"/>
<dbReference type="GlyCosmos" id="Q06655">
    <property type="glycosylation" value="1 site, No reported glycans"/>
</dbReference>
<dbReference type="GO" id="GO:0005576">
    <property type="term" value="C:extracellular region"/>
    <property type="evidence" value="ECO:0007669"/>
    <property type="project" value="UniProtKB-SubCell"/>
</dbReference>
<dbReference type="GO" id="GO:0005509">
    <property type="term" value="F:calcium ion binding"/>
    <property type="evidence" value="ECO:0007669"/>
    <property type="project" value="InterPro"/>
</dbReference>
<dbReference type="GO" id="GO:0004461">
    <property type="term" value="F:lactose synthase activity"/>
    <property type="evidence" value="ECO:0007669"/>
    <property type="project" value="InterPro"/>
</dbReference>
<dbReference type="GO" id="GO:0003796">
    <property type="term" value="F:lysozyme activity"/>
    <property type="evidence" value="ECO:0007669"/>
    <property type="project" value="TreeGrafter"/>
</dbReference>
<dbReference type="GO" id="GO:0050829">
    <property type="term" value="P:defense response to Gram-negative bacterium"/>
    <property type="evidence" value="ECO:0007669"/>
    <property type="project" value="TreeGrafter"/>
</dbReference>
<dbReference type="GO" id="GO:0050830">
    <property type="term" value="P:defense response to Gram-positive bacterium"/>
    <property type="evidence" value="ECO:0007669"/>
    <property type="project" value="TreeGrafter"/>
</dbReference>
<dbReference type="GO" id="GO:0005989">
    <property type="term" value="P:lactose biosynthetic process"/>
    <property type="evidence" value="ECO:0007669"/>
    <property type="project" value="UniProtKB-KW"/>
</dbReference>
<dbReference type="CDD" id="cd16898">
    <property type="entry name" value="LYZ_LA"/>
    <property type="match status" value="1"/>
</dbReference>
<dbReference type="Gene3D" id="1.10.530.10">
    <property type="match status" value="1"/>
</dbReference>
<dbReference type="InterPro" id="IPR001916">
    <property type="entry name" value="Glyco_hydro_22"/>
</dbReference>
<dbReference type="InterPro" id="IPR019799">
    <property type="entry name" value="Glyco_hydro_22_CS"/>
</dbReference>
<dbReference type="InterPro" id="IPR000545">
    <property type="entry name" value="Lactalbumin"/>
</dbReference>
<dbReference type="InterPro" id="IPR023346">
    <property type="entry name" value="Lysozyme-like_dom_sf"/>
</dbReference>
<dbReference type="PANTHER" id="PTHR11407:SF32">
    <property type="entry name" value="ALPHA-LACTALBUMIN"/>
    <property type="match status" value="1"/>
</dbReference>
<dbReference type="PANTHER" id="PTHR11407">
    <property type="entry name" value="LYSOZYME C"/>
    <property type="match status" value="1"/>
</dbReference>
<dbReference type="Pfam" id="PF00062">
    <property type="entry name" value="Lys"/>
    <property type="match status" value="1"/>
</dbReference>
<dbReference type="PRINTS" id="PR00136">
    <property type="entry name" value="LACTALBUMIN"/>
</dbReference>
<dbReference type="PRINTS" id="PR00135">
    <property type="entry name" value="LYZLACT"/>
</dbReference>
<dbReference type="SMART" id="SM00263">
    <property type="entry name" value="LYZ1"/>
    <property type="match status" value="1"/>
</dbReference>
<dbReference type="SUPFAM" id="SSF53955">
    <property type="entry name" value="Lysozyme-like"/>
    <property type="match status" value="1"/>
</dbReference>
<dbReference type="PROSITE" id="PS00128">
    <property type="entry name" value="GLYCOSYL_HYDROL_F22_1"/>
    <property type="match status" value="1"/>
</dbReference>
<dbReference type="PROSITE" id="PS51348">
    <property type="entry name" value="GLYCOSYL_HYDROL_F22_2"/>
    <property type="match status" value="1"/>
</dbReference>
<organism>
    <name type="scientific">Notamacropus eugenii</name>
    <name type="common">Tammar wallaby</name>
    <name type="synonym">Macropus eugenii</name>
    <dbReference type="NCBI Taxonomy" id="9315"/>
    <lineage>
        <taxon>Eukaryota</taxon>
        <taxon>Metazoa</taxon>
        <taxon>Chordata</taxon>
        <taxon>Craniata</taxon>
        <taxon>Vertebrata</taxon>
        <taxon>Euteleostomi</taxon>
        <taxon>Mammalia</taxon>
        <taxon>Metatheria</taxon>
        <taxon>Diprotodontia</taxon>
        <taxon>Macropodidae</taxon>
        <taxon>Notamacropus</taxon>
    </lineage>
</organism>
<name>LALBA_NOTEU</name>
<evidence type="ECO:0000250" key="1"/>
<evidence type="ECO:0000250" key="2">
    <source>
        <dbReference type="UniProtKB" id="P00711"/>
    </source>
</evidence>
<evidence type="ECO:0000255" key="3"/>
<evidence type="ECO:0000255" key="4">
    <source>
        <dbReference type="PROSITE-ProRule" id="PRU00680"/>
    </source>
</evidence>
<evidence type="ECO:0000305" key="5"/>
<protein>
    <recommendedName>
        <fullName>Alpha-lactalbumin</fullName>
    </recommendedName>
    <alternativeName>
        <fullName>Lactose synthase B protein</fullName>
    </alternativeName>
</protein>
<keyword id="KW-0106">Calcium</keyword>
<keyword id="KW-1015">Disulfide bond</keyword>
<keyword id="KW-0325">Glycoprotein</keyword>
<keyword id="KW-0422">Lactose biosynthesis</keyword>
<keyword id="KW-0479">Metal-binding</keyword>
<keyword id="KW-0494">Milk protein</keyword>
<keyword id="KW-0964">Secreted</keyword>
<keyword id="KW-0732">Signal</keyword>
<accession>Q06655</accession>
<proteinExistence type="evidence at transcript level"/>
<reference key="1">
    <citation type="journal article" date="1990" name="Reprod. Fertil. Dev.">
        <title>Cloning, cDNA analysis and prolactin-dependent expression of a marsupial alpha-lactalbumin.</title>
        <authorList>
            <person name="Collet C."/>
            <person name="Joseph R."/>
            <person name="Nicholas K.R."/>
        </authorList>
    </citation>
    <scope>NUCLEOTIDE SEQUENCE [MRNA]</scope>
    <source>
        <tissue>Mammary gland</tissue>
    </source>
</reference>
<reference key="2">
    <citation type="journal article" date="1995" name="Biochem. Genet.">
        <title>Exon organization and sequence of the genes encoding alpha-lactalbumin and beta-lactoglobulin from the tammar wallaby (Macropodidae, Marsupialia).</title>
        <authorList>
            <person name="Collet C."/>
            <person name="Joseph R."/>
        </authorList>
    </citation>
    <scope>NUCLEOTIDE SEQUENCE [GENOMIC DNA]</scope>
</reference>
<feature type="signal peptide" evidence="1">
    <location>
        <begin position="1"/>
        <end position="19"/>
    </location>
</feature>
<feature type="chain" id="PRO_0000018445" description="Alpha-lactalbumin">
    <location>
        <begin position="20"/>
        <end position="140"/>
    </location>
</feature>
<feature type="domain" description="C-type lysozyme" evidence="4">
    <location>
        <begin position="20"/>
        <end position="140"/>
    </location>
</feature>
<feature type="binding site" evidence="2">
    <location>
        <position position="98"/>
    </location>
    <ligand>
        <name>Ca(2+)</name>
        <dbReference type="ChEBI" id="CHEBI:29108"/>
    </ligand>
</feature>
<feature type="binding site" evidence="2">
    <location>
        <position position="101"/>
    </location>
    <ligand>
        <name>Ca(2+)</name>
        <dbReference type="ChEBI" id="CHEBI:29108"/>
    </ligand>
</feature>
<feature type="binding site" evidence="2">
    <location>
        <position position="103"/>
    </location>
    <ligand>
        <name>Ca(2+)</name>
        <dbReference type="ChEBI" id="CHEBI:29108"/>
    </ligand>
</feature>
<feature type="binding site" evidence="2">
    <location>
        <position position="106"/>
    </location>
    <ligand>
        <name>Ca(2+)</name>
        <dbReference type="ChEBI" id="CHEBI:29108"/>
    </ligand>
</feature>
<feature type="binding site" evidence="2">
    <location>
        <position position="107"/>
    </location>
    <ligand>
        <name>Ca(2+)</name>
        <dbReference type="ChEBI" id="CHEBI:29108"/>
    </ligand>
</feature>
<feature type="glycosylation site" description="N-linked (GlcNAc...) asparagine" evidence="3">
    <location>
        <position position="63"/>
    </location>
</feature>
<feature type="disulfide bond" evidence="4">
    <location>
        <begin position="25"/>
        <end position="140"/>
    </location>
</feature>
<feature type="disulfide bond" evidence="4">
    <location>
        <begin position="47"/>
        <end position="131"/>
    </location>
</feature>
<feature type="disulfide bond" evidence="4">
    <location>
        <begin position="80"/>
        <end position="96"/>
    </location>
</feature>
<feature type="disulfide bond" evidence="4">
    <location>
        <begin position="92"/>
        <end position="110"/>
    </location>
</feature>
<feature type="sequence conflict" description="In Ref. 2; AAA31602." evidence="5" ref="2">
    <original>I</original>
    <variation>L</variation>
    <location>
        <position position="132"/>
    </location>
</feature>